<dbReference type="EC" id="3.4.19.9"/>
<dbReference type="EMBL" id="U63726">
    <property type="protein sequence ID" value="AAB26960.1"/>
    <property type="molecule type" value="mRNA"/>
</dbReference>
<dbReference type="PIR" id="T08837">
    <property type="entry name" value="T08837"/>
</dbReference>
<dbReference type="RefSeq" id="NP_001235549.1">
    <property type="nucleotide sequence ID" value="NM_001248620.1"/>
</dbReference>
<dbReference type="SMR" id="P93164"/>
<dbReference type="STRING" id="3847.P93164"/>
<dbReference type="MEROPS" id="C26.002"/>
<dbReference type="PaxDb" id="3847-GLYMA13G34290.1"/>
<dbReference type="GeneID" id="547881"/>
<dbReference type="KEGG" id="gmx:547881"/>
<dbReference type="eggNOG" id="KOG1559">
    <property type="taxonomic scope" value="Eukaryota"/>
</dbReference>
<dbReference type="InParanoid" id="P93164"/>
<dbReference type="OrthoDB" id="64220at2759"/>
<dbReference type="Proteomes" id="UP000008827">
    <property type="component" value="Unplaced"/>
</dbReference>
<dbReference type="GO" id="GO:0005615">
    <property type="term" value="C:extracellular space"/>
    <property type="evidence" value="ECO:0000314"/>
    <property type="project" value="UniProtKB"/>
</dbReference>
<dbReference type="GO" id="GO:0009505">
    <property type="term" value="C:plant-type cell wall"/>
    <property type="evidence" value="ECO:0000314"/>
    <property type="project" value="UniProtKB"/>
</dbReference>
<dbReference type="GO" id="GO:0005773">
    <property type="term" value="C:vacuole"/>
    <property type="evidence" value="ECO:0000318"/>
    <property type="project" value="GO_Central"/>
</dbReference>
<dbReference type="GO" id="GO:0034722">
    <property type="term" value="F:gamma-glutamyl-peptidase activity"/>
    <property type="evidence" value="ECO:0000318"/>
    <property type="project" value="GO_Central"/>
</dbReference>
<dbReference type="GO" id="GO:0008242">
    <property type="term" value="F:omega peptidase activity"/>
    <property type="evidence" value="ECO:0000314"/>
    <property type="project" value="UniProtKB"/>
</dbReference>
<dbReference type="GO" id="GO:0046900">
    <property type="term" value="P:tetrahydrofolylpolyglutamate metabolic process"/>
    <property type="evidence" value="ECO:0000318"/>
    <property type="project" value="GO_Central"/>
</dbReference>
<dbReference type="FunFam" id="3.40.50.880:FF:000024">
    <property type="entry name" value="Folate gamma-glutamyl hydrolase"/>
    <property type="match status" value="1"/>
</dbReference>
<dbReference type="Gene3D" id="3.40.50.880">
    <property type="match status" value="1"/>
</dbReference>
<dbReference type="InterPro" id="IPR029062">
    <property type="entry name" value="Class_I_gatase-like"/>
</dbReference>
<dbReference type="InterPro" id="IPR015527">
    <property type="entry name" value="Pept_C26_g-glut_hydrolase"/>
</dbReference>
<dbReference type="InterPro" id="IPR011697">
    <property type="entry name" value="Peptidase_C26"/>
</dbReference>
<dbReference type="PANTHER" id="PTHR11315:SF0">
    <property type="entry name" value="FOLATE GAMMA-GLUTAMYL HYDROLASE"/>
    <property type="match status" value="1"/>
</dbReference>
<dbReference type="PANTHER" id="PTHR11315">
    <property type="entry name" value="PROTEASE FAMILY C26 GAMMA-GLUTAMYL HYDROLASE"/>
    <property type="match status" value="1"/>
</dbReference>
<dbReference type="Pfam" id="PF07722">
    <property type="entry name" value="Peptidase_C26"/>
    <property type="match status" value="1"/>
</dbReference>
<dbReference type="SUPFAM" id="SSF52317">
    <property type="entry name" value="Class I glutamine amidotransferase-like"/>
    <property type="match status" value="1"/>
</dbReference>
<dbReference type="PROSITE" id="PS51275">
    <property type="entry name" value="PEPTIDASE_C26_GGH"/>
    <property type="match status" value="1"/>
</dbReference>
<accession>P93164</accession>
<keyword id="KW-0134">Cell wall</keyword>
<keyword id="KW-0325">Glycoprotein</keyword>
<keyword id="KW-0378">Hydrolase</keyword>
<keyword id="KW-1185">Reference proteome</keyword>
<keyword id="KW-0964">Secreted</keyword>
<keyword id="KW-0732">Signal</keyword>
<name>GGH_SOYBN</name>
<organism>
    <name type="scientific">Glycine max</name>
    <name type="common">Soybean</name>
    <name type="synonym">Glycine hispida</name>
    <dbReference type="NCBI Taxonomy" id="3847"/>
    <lineage>
        <taxon>Eukaryota</taxon>
        <taxon>Viridiplantae</taxon>
        <taxon>Streptophyta</taxon>
        <taxon>Embryophyta</taxon>
        <taxon>Tracheophyta</taxon>
        <taxon>Spermatophyta</taxon>
        <taxon>Magnoliopsida</taxon>
        <taxon>eudicotyledons</taxon>
        <taxon>Gunneridae</taxon>
        <taxon>Pentapetalae</taxon>
        <taxon>rosids</taxon>
        <taxon>fabids</taxon>
        <taxon>Fabales</taxon>
        <taxon>Fabaceae</taxon>
        <taxon>Papilionoideae</taxon>
        <taxon>50 kb inversion clade</taxon>
        <taxon>NPAAA clade</taxon>
        <taxon>indigoferoid/millettioid clade</taxon>
        <taxon>Phaseoleae</taxon>
        <taxon>Glycine</taxon>
        <taxon>Glycine subgen. Soja</taxon>
    </lineage>
</organism>
<reference key="1">
    <citation type="journal article" date="1996" name="Biochem. Biophys. Res. Commun.">
        <title>Purification and molecular analysis of an extracellular gamma-glutamyl hydrolase present in young tissues of the soybean plant.</title>
        <authorList>
            <person name="Huangpu J."/>
            <person name="Pak J.H."/>
            <person name="Burkhart W."/>
            <person name="Graham M.C."/>
            <person name="Rickle S.A."/>
            <person name="Graham J.S."/>
        </authorList>
    </citation>
    <scope>NUCLEOTIDE SEQUENCE [MRNA]</scope>
    <source>
        <strain>cv. Williams 82</strain>
    </source>
</reference>
<feature type="signal peptide" evidence="1">
    <location>
        <begin position="1"/>
        <end position="21"/>
    </location>
</feature>
<feature type="chain" id="PRO_0000026543" description="Gamma-glutamyl hydrolase">
    <location>
        <begin position="22"/>
        <end position="342"/>
    </location>
</feature>
<feature type="domain" description="Gamma-glutamyl hydrolase" evidence="2">
    <location>
        <begin position="45"/>
        <end position="342"/>
    </location>
</feature>
<feature type="glycosylation site" description="N-linked (GlcNAc...) asparagine" evidence="1">
    <location>
        <position position="72"/>
    </location>
</feature>
<sequence length="342" mass="37676">MPNDSVLSLFFFVTLFTCLLSATSHDDHIFLPSQLHDDDSVSCTATDPSLNYKPVIGILTHPGDGASGRLSNATGVSYIAASYVKFVESGGARVIPLIYNESPENLNKKLDLVNGVLFTGGWAVSGPYLDTLGNIFKKALERNDAGDHFPVIAFNLGGNLVIRIVSEQTDILEPFTASSLPSSLVLWNEANAKGSLFQRFPSDLLTQLKTDCLVLHNHRYAISPRKLQYNTKLSDFFEILATSGDRDGKTFVSTARGRKYPVTVNLWQPEKNAFEWATSLKAPHTEDAIRVTQSTANFFISEARKSTNTPDAQKVRDSLIYNYKPTFGGTAGKGYDQVYLFE</sequence>
<proteinExistence type="evidence at transcript level"/>
<comment type="catalytic activity">
    <reaction>
        <text>(6S)-5,6,7,8-tetrahydrofolyl-(gamma-L-Glu)(n) + (n-1) H2O = (6S)-5,6,7,8-tetrahydrofolate + (n-1) L-glutamate</text>
        <dbReference type="Rhea" id="RHEA:56784"/>
        <dbReference type="Rhea" id="RHEA-COMP:14738"/>
        <dbReference type="ChEBI" id="CHEBI:15377"/>
        <dbReference type="ChEBI" id="CHEBI:29985"/>
        <dbReference type="ChEBI" id="CHEBI:57453"/>
        <dbReference type="ChEBI" id="CHEBI:141005"/>
        <dbReference type="EC" id="3.4.19.9"/>
    </reaction>
</comment>
<comment type="subcellular location">
    <subcellularLocation>
        <location>Secreted</location>
        <location>Extracellular space</location>
    </subcellularLocation>
    <subcellularLocation>
        <location>Secreted</location>
        <location>Cell wall</location>
    </subcellularLocation>
    <text>Extracellular or cell-wall bound.</text>
</comment>
<comment type="tissue specificity">
    <text>Expressed only in young (1-15 day old) leaf, stem and root tissue.</text>
</comment>
<comment type="similarity">
    <text evidence="3">Belongs to the peptidase C26 family.</text>
</comment>
<comment type="caution">
    <text evidence="3">Lacks the conserved Cys residue in position 155 and the conserved His residue in position 268 essential for carbopeptidase activity. Its enzyme activity is therefore unsure.</text>
</comment>
<evidence type="ECO:0000255" key="1"/>
<evidence type="ECO:0000255" key="2">
    <source>
        <dbReference type="PROSITE-ProRule" id="PRU00607"/>
    </source>
</evidence>
<evidence type="ECO:0000305" key="3"/>
<protein>
    <recommendedName>
        <fullName>Gamma-glutamyl hydrolase</fullName>
        <ecNumber>3.4.19.9</ecNumber>
    </recommendedName>
    <alternativeName>
        <fullName>Conjugase</fullName>
    </alternativeName>
    <alternativeName>
        <fullName>GH</fullName>
    </alternativeName>
    <alternativeName>
        <fullName>Gamma-Glu-X carboxypeptidase</fullName>
    </alternativeName>
</protein>